<organism>
    <name type="scientific">Escherichia fergusonii (strain ATCC 35469 / DSM 13698 / CCUG 18766 / IAM 14443 / JCM 21226 / LMG 7866 / NBRC 102419 / NCTC 12128 / CDC 0568-73)</name>
    <dbReference type="NCBI Taxonomy" id="585054"/>
    <lineage>
        <taxon>Bacteria</taxon>
        <taxon>Pseudomonadati</taxon>
        <taxon>Pseudomonadota</taxon>
        <taxon>Gammaproteobacteria</taxon>
        <taxon>Enterobacterales</taxon>
        <taxon>Enterobacteriaceae</taxon>
        <taxon>Escherichia</taxon>
    </lineage>
</organism>
<evidence type="ECO:0000255" key="1">
    <source>
        <dbReference type="HAMAP-Rule" id="MF_00382"/>
    </source>
</evidence>
<evidence type="ECO:0000305" key="2"/>
<comment type="function">
    <text evidence="1">Binds directly to 23S ribosomal RNA and is necessary for the in vitro assembly process of the 50S ribosomal subunit. It is not involved in the protein synthesizing functions of that subunit.</text>
</comment>
<comment type="similarity">
    <text evidence="1">Belongs to the bacterial ribosomal protein bL20 family.</text>
</comment>
<dbReference type="EMBL" id="CU928158">
    <property type="protein sequence ID" value="CAQ88871.1"/>
    <property type="molecule type" value="Genomic_DNA"/>
</dbReference>
<dbReference type="RefSeq" id="WP_000124850.1">
    <property type="nucleotide sequence ID" value="NC_011740.1"/>
</dbReference>
<dbReference type="SMR" id="B7LQ74"/>
<dbReference type="GeneID" id="98388757"/>
<dbReference type="KEGG" id="efe:EFER_1350"/>
<dbReference type="HOGENOM" id="CLU_123265_0_1_6"/>
<dbReference type="OrthoDB" id="9808966at2"/>
<dbReference type="Proteomes" id="UP000000745">
    <property type="component" value="Chromosome"/>
</dbReference>
<dbReference type="GO" id="GO:1990904">
    <property type="term" value="C:ribonucleoprotein complex"/>
    <property type="evidence" value="ECO:0007669"/>
    <property type="project" value="UniProtKB-KW"/>
</dbReference>
<dbReference type="GO" id="GO:0005840">
    <property type="term" value="C:ribosome"/>
    <property type="evidence" value="ECO:0007669"/>
    <property type="project" value="UniProtKB-KW"/>
</dbReference>
<dbReference type="GO" id="GO:0019843">
    <property type="term" value="F:rRNA binding"/>
    <property type="evidence" value="ECO:0007669"/>
    <property type="project" value="UniProtKB-UniRule"/>
</dbReference>
<dbReference type="GO" id="GO:0003735">
    <property type="term" value="F:structural constituent of ribosome"/>
    <property type="evidence" value="ECO:0007669"/>
    <property type="project" value="InterPro"/>
</dbReference>
<dbReference type="GO" id="GO:0000027">
    <property type="term" value="P:ribosomal large subunit assembly"/>
    <property type="evidence" value="ECO:0007669"/>
    <property type="project" value="UniProtKB-UniRule"/>
</dbReference>
<dbReference type="GO" id="GO:0006412">
    <property type="term" value="P:translation"/>
    <property type="evidence" value="ECO:0007669"/>
    <property type="project" value="InterPro"/>
</dbReference>
<dbReference type="CDD" id="cd07026">
    <property type="entry name" value="Ribosomal_L20"/>
    <property type="match status" value="1"/>
</dbReference>
<dbReference type="FunFam" id="1.10.1900.20:FF:000001">
    <property type="entry name" value="50S ribosomal protein L20"/>
    <property type="match status" value="1"/>
</dbReference>
<dbReference type="Gene3D" id="6.10.160.10">
    <property type="match status" value="1"/>
</dbReference>
<dbReference type="Gene3D" id="1.10.1900.20">
    <property type="entry name" value="Ribosomal protein L20"/>
    <property type="match status" value="1"/>
</dbReference>
<dbReference type="HAMAP" id="MF_00382">
    <property type="entry name" value="Ribosomal_bL20"/>
    <property type="match status" value="1"/>
</dbReference>
<dbReference type="InterPro" id="IPR005813">
    <property type="entry name" value="Ribosomal_bL20"/>
</dbReference>
<dbReference type="InterPro" id="IPR049946">
    <property type="entry name" value="RIBOSOMAL_L20_CS"/>
</dbReference>
<dbReference type="InterPro" id="IPR035566">
    <property type="entry name" value="Ribosomal_protein_bL20_C"/>
</dbReference>
<dbReference type="NCBIfam" id="TIGR01032">
    <property type="entry name" value="rplT_bact"/>
    <property type="match status" value="1"/>
</dbReference>
<dbReference type="PANTHER" id="PTHR10986">
    <property type="entry name" value="39S RIBOSOMAL PROTEIN L20"/>
    <property type="match status" value="1"/>
</dbReference>
<dbReference type="Pfam" id="PF00453">
    <property type="entry name" value="Ribosomal_L20"/>
    <property type="match status" value="1"/>
</dbReference>
<dbReference type="PRINTS" id="PR00062">
    <property type="entry name" value="RIBOSOMALL20"/>
</dbReference>
<dbReference type="SUPFAM" id="SSF74731">
    <property type="entry name" value="Ribosomal protein L20"/>
    <property type="match status" value="1"/>
</dbReference>
<dbReference type="PROSITE" id="PS00937">
    <property type="entry name" value="RIBOSOMAL_L20"/>
    <property type="match status" value="1"/>
</dbReference>
<reference key="1">
    <citation type="journal article" date="2009" name="PLoS Genet.">
        <title>Organised genome dynamics in the Escherichia coli species results in highly diverse adaptive paths.</title>
        <authorList>
            <person name="Touchon M."/>
            <person name="Hoede C."/>
            <person name="Tenaillon O."/>
            <person name="Barbe V."/>
            <person name="Baeriswyl S."/>
            <person name="Bidet P."/>
            <person name="Bingen E."/>
            <person name="Bonacorsi S."/>
            <person name="Bouchier C."/>
            <person name="Bouvet O."/>
            <person name="Calteau A."/>
            <person name="Chiapello H."/>
            <person name="Clermont O."/>
            <person name="Cruveiller S."/>
            <person name="Danchin A."/>
            <person name="Diard M."/>
            <person name="Dossat C."/>
            <person name="Karoui M.E."/>
            <person name="Frapy E."/>
            <person name="Garry L."/>
            <person name="Ghigo J.M."/>
            <person name="Gilles A.M."/>
            <person name="Johnson J."/>
            <person name="Le Bouguenec C."/>
            <person name="Lescat M."/>
            <person name="Mangenot S."/>
            <person name="Martinez-Jehanne V."/>
            <person name="Matic I."/>
            <person name="Nassif X."/>
            <person name="Oztas S."/>
            <person name="Petit M.A."/>
            <person name="Pichon C."/>
            <person name="Rouy Z."/>
            <person name="Ruf C.S."/>
            <person name="Schneider D."/>
            <person name="Tourret J."/>
            <person name="Vacherie B."/>
            <person name="Vallenet D."/>
            <person name="Medigue C."/>
            <person name="Rocha E.P.C."/>
            <person name="Denamur E."/>
        </authorList>
    </citation>
    <scope>NUCLEOTIDE SEQUENCE [LARGE SCALE GENOMIC DNA]</scope>
    <source>
        <strain>ATCC 35469 / DSM 13698 / BCRC 15582 / CCUG 18766 / IAM 14443 / JCM 21226 / LMG 7866 / NBRC 102419 / NCTC 12128 / CDC 0568-73</strain>
    </source>
</reference>
<name>RL20_ESCF3</name>
<keyword id="KW-0687">Ribonucleoprotein</keyword>
<keyword id="KW-0689">Ribosomal protein</keyword>
<keyword id="KW-0694">RNA-binding</keyword>
<keyword id="KW-0699">rRNA-binding</keyword>
<accession>B7LQ74</accession>
<gene>
    <name evidence="1" type="primary">rplT</name>
    <name type="ordered locus">EFER_1350</name>
</gene>
<sequence>MARVKRGVIARARHKKILKQAKGYYGARSRVYRVAFQAVIKAGQYAYRDRRQRKRQFRQLWIARINAAARQNGISYSKFINGLKKASVEIDRKILADIAVFDKVAFTALVEKAKAALA</sequence>
<proteinExistence type="inferred from homology"/>
<feature type="chain" id="PRO_1000122317" description="Large ribosomal subunit protein bL20">
    <location>
        <begin position="1"/>
        <end position="118"/>
    </location>
</feature>
<protein>
    <recommendedName>
        <fullName evidence="1">Large ribosomal subunit protein bL20</fullName>
    </recommendedName>
    <alternativeName>
        <fullName evidence="2">50S ribosomal protein L20</fullName>
    </alternativeName>
</protein>